<name>APBB3_MOUSE</name>
<protein>
    <recommendedName>
        <fullName>Amyloid-beta A4 precursor protein-binding family B member 3</fullName>
    </recommendedName>
    <alternativeName>
        <fullName>Protein Fe65-like 2</fullName>
        <shortName>Fe65L2</shortName>
    </alternativeName>
</protein>
<evidence type="ECO:0000250" key="1"/>
<evidence type="ECO:0000250" key="2">
    <source>
        <dbReference type="UniProtKB" id="O95704"/>
    </source>
</evidence>
<evidence type="ECO:0000255" key="3">
    <source>
        <dbReference type="PROSITE-ProRule" id="PRU00148"/>
    </source>
</evidence>
<evidence type="ECO:0000255" key="4">
    <source>
        <dbReference type="PROSITE-ProRule" id="PRU00224"/>
    </source>
</evidence>
<evidence type="ECO:0000256" key="5">
    <source>
        <dbReference type="SAM" id="MobiDB-lite"/>
    </source>
</evidence>
<evidence type="ECO:0000312" key="6">
    <source>
        <dbReference type="MGI" id="MGI:108404"/>
    </source>
</evidence>
<sequence>MLGKDYMLAIILVNCDDDLWGDQNLEGETGLPPGWRKIRDAAGTYYWHVPSGSTQWQRPTWELPGAEDPGRGTEGIWELRPPKGRSFSSLDSSLNRSNSLTWYSEDSYVRSLEPGAKCFAVRSLGWVEVPEEDLAPGKSSIAVNNCIQQLAQTRNRSQPHDGTWGEGQNMLMILKKDAMSLLNPLDHSLIHCQPLVHIRVWGVGSSKGRDRDFAFVAGDKDSCMLKCHVFHCDVPAKAIASALQGLCAQILSERVGVSGEAACCSPDPISPEDLPRQVELLDAVSQAAQKYEALYMGILPVTKAMGMDVLNEAIGTLTARGDRKTWVPAMLSVSDSLMTAHAIQAEAGAEEEPLWQCPVRLVTFIGVGRDPHTFGLIADLGCQSFQCAAFWCEPHAGGLSEAVQAACMVQYQKCLVASAARGKAWGAQARARLRLKRTSSMDSPGGPLPPPLLKGGAGGAGAAPRKRGVFSFLDAFRLKPSLLHMS</sequence>
<feature type="chain" id="PRO_0000076055" description="Amyloid-beta A4 precursor protein-binding family B member 3">
    <location>
        <begin position="1"/>
        <end position="486"/>
    </location>
</feature>
<feature type="domain" description="WW" evidence="4">
    <location>
        <begin position="29"/>
        <end position="61"/>
    </location>
</feature>
<feature type="domain" description="PID 1" evidence="3">
    <location>
        <begin position="113"/>
        <end position="280"/>
    </location>
</feature>
<feature type="domain" description="PID 2" evidence="3">
    <location>
        <begin position="285"/>
        <end position="440"/>
    </location>
</feature>
<feature type="region of interest" description="Disordered" evidence="5">
    <location>
        <begin position="438"/>
        <end position="460"/>
    </location>
</feature>
<reference key="1">
    <citation type="journal article" date="2004" name="Genome Res.">
        <title>The status, quality, and expansion of the NIH full-length cDNA project: the Mammalian Gene Collection (MGC).</title>
        <authorList>
            <consortium name="The MGC Project Team"/>
        </authorList>
    </citation>
    <scope>NUCLEOTIDE SEQUENCE [LARGE SCALE MRNA]</scope>
    <source>
        <tissue>Eye</tissue>
    </source>
</reference>
<dbReference type="EMBL" id="BC024809">
    <property type="protein sequence ID" value="AAH24809.1"/>
    <property type="molecule type" value="mRNA"/>
</dbReference>
<dbReference type="CCDS" id="CCDS29157.1"/>
<dbReference type="RefSeq" id="NP_666197.1">
    <property type="nucleotide sequence ID" value="NM_146085.2"/>
</dbReference>
<dbReference type="SMR" id="Q8R1C9"/>
<dbReference type="FunCoup" id="Q8R1C9">
    <property type="interactions" value="1914"/>
</dbReference>
<dbReference type="IntAct" id="Q8R1C9">
    <property type="interactions" value="1"/>
</dbReference>
<dbReference type="MINT" id="Q8R1C9"/>
<dbReference type="STRING" id="10090.ENSMUSP00000001415"/>
<dbReference type="iPTMnet" id="Q8R1C9"/>
<dbReference type="PhosphoSitePlus" id="Q8R1C9"/>
<dbReference type="ProteomicsDB" id="296366"/>
<dbReference type="Antibodypedia" id="1613">
    <property type="antibodies" value="186 antibodies from 24 providers"/>
</dbReference>
<dbReference type="DNASU" id="225372"/>
<dbReference type="Ensembl" id="ENSMUST00000001415.9">
    <property type="protein sequence ID" value="ENSMUSP00000001415.8"/>
    <property type="gene ID" value="ENSMUSG00000117679.2"/>
</dbReference>
<dbReference type="GeneID" id="225372"/>
<dbReference type="KEGG" id="mmu:225372"/>
<dbReference type="UCSC" id="uc033hgf.1">
    <property type="organism name" value="mouse"/>
</dbReference>
<dbReference type="AGR" id="MGI:108404"/>
<dbReference type="CTD" id="10307"/>
<dbReference type="MGI" id="MGI:108404">
    <property type="gene designation" value="Apbb3"/>
</dbReference>
<dbReference type="VEuPathDB" id="HostDB:ENSMUSG00000117679"/>
<dbReference type="GeneTree" id="ENSGT00390000000002"/>
<dbReference type="HOGENOM" id="CLU_021196_0_0_1"/>
<dbReference type="InParanoid" id="Q8R1C9"/>
<dbReference type="OMA" id="SWQEEYF"/>
<dbReference type="OrthoDB" id="5969782at2759"/>
<dbReference type="PhylomeDB" id="Q8R1C9"/>
<dbReference type="TreeFam" id="TF314331"/>
<dbReference type="BioGRID-ORCS" id="225372">
    <property type="hits" value="0 hits in 47 CRISPR screens"/>
</dbReference>
<dbReference type="ChiTaRS" id="Apbb3">
    <property type="organism name" value="mouse"/>
</dbReference>
<dbReference type="PRO" id="PR:Q8R1C9"/>
<dbReference type="Proteomes" id="UP000000589">
    <property type="component" value="Chromosome 18"/>
</dbReference>
<dbReference type="RNAct" id="Q8R1C9">
    <property type="molecule type" value="protein"/>
</dbReference>
<dbReference type="Bgee" id="ENSMUSG00000117679">
    <property type="expression patterns" value="Expressed in retinal neural layer and 189 other cell types or tissues"/>
</dbReference>
<dbReference type="ExpressionAtlas" id="Q8R1C9">
    <property type="expression patterns" value="baseline and differential"/>
</dbReference>
<dbReference type="GO" id="GO:0015629">
    <property type="term" value="C:actin cytoskeleton"/>
    <property type="evidence" value="ECO:0007669"/>
    <property type="project" value="Ensembl"/>
</dbReference>
<dbReference type="GO" id="GO:0005829">
    <property type="term" value="C:cytosol"/>
    <property type="evidence" value="ECO:0007669"/>
    <property type="project" value="Ensembl"/>
</dbReference>
<dbReference type="GO" id="GO:0016020">
    <property type="term" value="C:membrane"/>
    <property type="evidence" value="ECO:0007669"/>
    <property type="project" value="Ensembl"/>
</dbReference>
<dbReference type="GO" id="GO:0016604">
    <property type="term" value="C:nuclear body"/>
    <property type="evidence" value="ECO:0007669"/>
    <property type="project" value="Ensembl"/>
</dbReference>
<dbReference type="GO" id="GO:0001540">
    <property type="term" value="F:amyloid-beta binding"/>
    <property type="evidence" value="ECO:0007669"/>
    <property type="project" value="InterPro"/>
</dbReference>
<dbReference type="GO" id="GO:0050750">
    <property type="term" value="F:low-density lipoprotein particle receptor binding"/>
    <property type="evidence" value="ECO:0007669"/>
    <property type="project" value="Ensembl"/>
</dbReference>
<dbReference type="GO" id="GO:0043066">
    <property type="term" value="P:negative regulation of apoptotic process"/>
    <property type="evidence" value="ECO:0000304"/>
    <property type="project" value="MGI"/>
</dbReference>
<dbReference type="GO" id="GO:0050714">
    <property type="term" value="P:positive regulation of protein secretion"/>
    <property type="evidence" value="ECO:0007669"/>
    <property type="project" value="Ensembl"/>
</dbReference>
<dbReference type="CDD" id="cd01272">
    <property type="entry name" value="PTB1_Fe65"/>
    <property type="match status" value="1"/>
</dbReference>
<dbReference type="CDD" id="cd01271">
    <property type="entry name" value="PTB2_Fe65"/>
    <property type="match status" value="1"/>
</dbReference>
<dbReference type="CDD" id="cd00201">
    <property type="entry name" value="WW"/>
    <property type="match status" value="1"/>
</dbReference>
<dbReference type="FunFam" id="2.20.70.10:FF:000003">
    <property type="entry name" value="amyloid beta A4 precursor protein-binding family B member 2"/>
    <property type="match status" value="1"/>
</dbReference>
<dbReference type="FunFam" id="2.30.29.30:FF:000153">
    <property type="entry name" value="amyloid beta A4 precursor protein-binding family B member 3 isoform X1"/>
    <property type="match status" value="1"/>
</dbReference>
<dbReference type="FunFam" id="2.30.29.30:FF:000143">
    <property type="entry name" value="amyloid beta A4 precursor protein-binding family B member 3 isoform X2"/>
    <property type="match status" value="1"/>
</dbReference>
<dbReference type="Gene3D" id="2.20.70.10">
    <property type="match status" value="1"/>
</dbReference>
<dbReference type="Gene3D" id="2.30.29.30">
    <property type="entry name" value="Pleckstrin-homology domain (PH domain)/Phosphotyrosine-binding domain (PTB)"/>
    <property type="match status" value="2"/>
</dbReference>
<dbReference type="InterPro" id="IPR039576">
    <property type="entry name" value="APBB1/2/3"/>
</dbReference>
<dbReference type="InterPro" id="IPR011993">
    <property type="entry name" value="PH-like_dom_sf"/>
</dbReference>
<dbReference type="InterPro" id="IPR006020">
    <property type="entry name" value="PTB/PI_dom"/>
</dbReference>
<dbReference type="InterPro" id="IPR001202">
    <property type="entry name" value="WW_dom"/>
</dbReference>
<dbReference type="InterPro" id="IPR036020">
    <property type="entry name" value="WW_dom_sf"/>
</dbReference>
<dbReference type="PANTHER" id="PTHR14058">
    <property type="entry name" value="AMYLOID BETA A4 PRECURSOR PROTEIN-BINDING FAMILY B"/>
    <property type="match status" value="1"/>
</dbReference>
<dbReference type="PANTHER" id="PTHR14058:SF10">
    <property type="entry name" value="AMYLOID-BETA A4 PRECURSOR PROTEIN-BINDING FAMILY B MEMBER 3"/>
    <property type="match status" value="1"/>
</dbReference>
<dbReference type="Pfam" id="PF00640">
    <property type="entry name" value="PID"/>
    <property type="match status" value="1"/>
</dbReference>
<dbReference type="Pfam" id="PF00397">
    <property type="entry name" value="WW"/>
    <property type="match status" value="1"/>
</dbReference>
<dbReference type="SMART" id="SM00462">
    <property type="entry name" value="PTB"/>
    <property type="match status" value="2"/>
</dbReference>
<dbReference type="SMART" id="SM00456">
    <property type="entry name" value="WW"/>
    <property type="match status" value="1"/>
</dbReference>
<dbReference type="SUPFAM" id="SSF50729">
    <property type="entry name" value="PH domain-like"/>
    <property type="match status" value="2"/>
</dbReference>
<dbReference type="SUPFAM" id="SSF51045">
    <property type="entry name" value="WW domain"/>
    <property type="match status" value="1"/>
</dbReference>
<dbReference type="PROSITE" id="PS01179">
    <property type="entry name" value="PID"/>
    <property type="match status" value="2"/>
</dbReference>
<dbReference type="PROSITE" id="PS01159">
    <property type="entry name" value="WW_DOMAIN_1"/>
    <property type="match status" value="1"/>
</dbReference>
<dbReference type="PROSITE" id="PS50020">
    <property type="entry name" value="WW_DOMAIN_2"/>
    <property type="match status" value="1"/>
</dbReference>
<comment type="function">
    <text evidence="1">May modulate the internalization of amyloid-beta precursor protein.</text>
</comment>
<comment type="subunit">
    <text evidence="2">Interacts with APP (via intracellular domain) (By similarity). Interacts with APLP1 and APLP2 (via intracellular domain) (By similarity).</text>
</comment>
<comment type="subcellular location">
    <subcellularLocation>
        <location evidence="2">Cytoplasm</location>
    </subcellularLocation>
    <subcellularLocation>
        <location evidence="2">Nucleus</location>
    </subcellularLocation>
</comment>
<organism>
    <name type="scientific">Mus musculus</name>
    <name type="common">Mouse</name>
    <dbReference type="NCBI Taxonomy" id="10090"/>
    <lineage>
        <taxon>Eukaryota</taxon>
        <taxon>Metazoa</taxon>
        <taxon>Chordata</taxon>
        <taxon>Craniata</taxon>
        <taxon>Vertebrata</taxon>
        <taxon>Euteleostomi</taxon>
        <taxon>Mammalia</taxon>
        <taxon>Eutheria</taxon>
        <taxon>Euarchontoglires</taxon>
        <taxon>Glires</taxon>
        <taxon>Rodentia</taxon>
        <taxon>Myomorpha</taxon>
        <taxon>Muroidea</taxon>
        <taxon>Muridae</taxon>
        <taxon>Murinae</taxon>
        <taxon>Mus</taxon>
        <taxon>Mus</taxon>
    </lineage>
</organism>
<accession>Q8R1C9</accession>
<gene>
    <name evidence="6" type="primary">Apbb3</name>
    <name evidence="6" type="synonym">Fe65l2</name>
</gene>
<keyword id="KW-0963">Cytoplasm</keyword>
<keyword id="KW-0539">Nucleus</keyword>
<keyword id="KW-1185">Reference proteome</keyword>
<keyword id="KW-0677">Repeat</keyword>
<proteinExistence type="evidence at transcript level"/>